<accession>B8G5Y4</accession>
<reference key="1">
    <citation type="submission" date="2008-12" db="EMBL/GenBank/DDBJ databases">
        <title>Complete sequence of Chloroflexus aggregans DSM 9485.</title>
        <authorList>
            <consortium name="US DOE Joint Genome Institute"/>
            <person name="Lucas S."/>
            <person name="Copeland A."/>
            <person name="Lapidus A."/>
            <person name="Glavina del Rio T."/>
            <person name="Dalin E."/>
            <person name="Tice H."/>
            <person name="Pitluck S."/>
            <person name="Foster B."/>
            <person name="Larimer F."/>
            <person name="Land M."/>
            <person name="Hauser L."/>
            <person name="Kyrpides N."/>
            <person name="Mikhailova N."/>
            <person name="Bryant D.A."/>
            <person name="Richardson P."/>
        </authorList>
    </citation>
    <scope>NUCLEOTIDE SEQUENCE [LARGE SCALE GENOMIC DNA]</scope>
    <source>
        <strain>MD-66 / DSM 9485</strain>
    </source>
</reference>
<evidence type="ECO:0000255" key="1">
    <source>
        <dbReference type="HAMAP-Rule" id="MF_00037"/>
    </source>
</evidence>
<sequence>MKESLPITLRPNEPMSRHTSWRVGGPAQYYAEPTTPDEAMVLAAWAMTHRLPLIWVGRGTNLLVRDEGFAGVIASYRGQRWALHEHGETAELWVEAGTPMAGTARRLAAMGWAGLEWAEGLPGAIGGAIVGNAGCYGGDTASVLIDAELLLNGSERVVWPVTELGYAYRESILKRPGADGVPPLVLAGRFRLHRADPKVLMARIGAIAAERKRKTPAGSSCGSVFKNPPGDSAGRLIEAAGLKGTRVGDAEISPIHANYIVNRGQARAADILTLIELARTTVAEQFGVMLQLEVRVI</sequence>
<comment type="function">
    <text evidence="1">Cell wall formation.</text>
</comment>
<comment type="catalytic activity">
    <reaction evidence="1">
        <text>UDP-N-acetyl-alpha-D-muramate + NADP(+) = UDP-N-acetyl-3-O-(1-carboxyvinyl)-alpha-D-glucosamine + NADPH + H(+)</text>
        <dbReference type="Rhea" id="RHEA:12248"/>
        <dbReference type="ChEBI" id="CHEBI:15378"/>
        <dbReference type="ChEBI" id="CHEBI:57783"/>
        <dbReference type="ChEBI" id="CHEBI:58349"/>
        <dbReference type="ChEBI" id="CHEBI:68483"/>
        <dbReference type="ChEBI" id="CHEBI:70757"/>
        <dbReference type="EC" id="1.3.1.98"/>
    </reaction>
</comment>
<comment type="cofactor">
    <cofactor evidence="1">
        <name>FAD</name>
        <dbReference type="ChEBI" id="CHEBI:57692"/>
    </cofactor>
</comment>
<comment type="pathway">
    <text evidence="1">Cell wall biogenesis; peptidoglycan biosynthesis.</text>
</comment>
<comment type="subcellular location">
    <subcellularLocation>
        <location evidence="1">Cytoplasm</location>
    </subcellularLocation>
</comment>
<comment type="similarity">
    <text evidence="1">Belongs to the MurB family.</text>
</comment>
<name>MURB_CHLAD</name>
<dbReference type="EC" id="1.3.1.98" evidence="1"/>
<dbReference type="EMBL" id="CP001337">
    <property type="protein sequence ID" value="ACL25717.1"/>
    <property type="molecule type" value="Genomic_DNA"/>
</dbReference>
<dbReference type="RefSeq" id="WP_015941573.1">
    <property type="nucleotide sequence ID" value="NC_011831.1"/>
</dbReference>
<dbReference type="SMR" id="B8G5Y4"/>
<dbReference type="STRING" id="326427.Cagg_2855"/>
<dbReference type="KEGG" id="cag:Cagg_2855"/>
<dbReference type="eggNOG" id="COG0812">
    <property type="taxonomic scope" value="Bacteria"/>
</dbReference>
<dbReference type="HOGENOM" id="CLU_035304_1_1_0"/>
<dbReference type="OrthoDB" id="9804753at2"/>
<dbReference type="UniPathway" id="UPA00219"/>
<dbReference type="Proteomes" id="UP000002508">
    <property type="component" value="Chromosome"/>
</dbReference>
<dbReference type="GO" id="GO:0005829">
    <property type="term" value="C:cytosol"/>
    <property type="evidence" value="ECO:0007669"/>
    <property type="project" value="TreeGrafter"/>
</dbReference>
<dbReference type="GO" id="GO:0071949">
    <property type="term" value="F:FAD binding"/>
    <property type="evidence" value="ECO:0007669"/>
    <property type="project" value="InterPro"/>
</dbReference>
<dbReference type="GO" id="GO:0008762">
    <property type="term" value="F:UDP-N-acetylmuramate dehydrogenase activity"/>
    <property type="evidence" value="ECO:0007669"/>
    <property type="project" value="UniProtKB-UniRule"/>
</dbReference>
<dbReference type="GO" id="GO:0051301">
    <property type="term" value="P:cell division"/>
    <property type="evidence" value="ECO:0007669"/>
    <property type="project" value="UniProtKB-KW"/>
</dbReference>
<dbReference type="GO" id="GO:0071555">
    <property type="term" value="P:cell wall organization"/>
    <property type="evidence" value="ECO:0007669"/>
    <property type="project" value="UniProtKB-KW"/>
</dbReference>
<dbReference type="GO" id="GO:0009252">
    <property type="term" value="P:peptidoglycan biosynthetic process"/>
    <property type="evidence" value="ECO:0007669"/>
    <property type="project" value="UniProtKB-UniRule"/>
</dbReference>
<dbReference type="GO" id="GO:0008360">
    <property type="term" value="P:regulation of cell shape"/>
    <property type="evidence" value="ECO:0007669"/>
    <property type="project" value="UniProtKB-KW"/>
</dbReference>
<dbReference type="Gene3D" id="3.30.465.10">
    <property type="match status" value="1"/>
</dbReference>
<dbReference type="Gene3D" id="3.90.78.10">
    <property type="entry name" value="UDP-N-acetylenolpyruvoylglucosamine reductase, C-terminal domain"/>
    <property type="match status" value="1"/>
</dbReference>
<dbReference type="Gene3D" id="3.30.43.10">
    <property type="entry name" value="Uridine Diphospho-n-acetylenolpyruvylglucosamine Reductase, domain 2"/>
    <property type="match status" value="1"/>
</dbReference>
<dbReference type="HAMAP" id="MF_00037">
    <property type="entry name" value="MurB"/>
    <property type="match status" value="1"/>
</dbReference>
<dbReference type="InterPro" id="IPR016166">
    <property type="entry name" value="FAD-bd_PCMH"/>
</dbReference>
<dbReference type="InterPro" id="IPR036318">
    <property type="entry name" value="FAD-bd_PCMH-like_sf"/>
</dbReference>
<dbReference type="InterPro" id="IPR016167">
    <property type="entry name" value="FAD-bd_PCMH_sub1"/>
</dbReference>
<dbReference type="InterPro" id="IPR016169">
    <property type="entry name" value="FAD-bd_PCMH_sub2"/>
</dbReference>
<dbReference type="InterPro" id="IPR003170">
    <property type="entry name" value="MurB"/>
</dbReference>
<dbReference type="InterPro" id="IPR011601">
    <property type="entry name" value="MurB_C"/>
</dbReference>
<dbReference type="InterPro" id="IPR036635">
    <property type="entry name" value="MurB_C_sf"/>
</dbReference>
<dbReference type="InterPro" id="IPR006094">
    <property type="entry name" value="Oxid_FAD_bind_N"/>
</dbReference>
<dbReference type="NCBIfam" id="TIGR00179">
    <property type="entry name" value="murB"/>
    <property type="match status" value="1"/>
</dbReference>
<dbReference type="NCBIfam" id="NF010480">
    <property type="entry name" value="PRK13905.1"/>
    <property type="match status" value="1"/>
</dbReference>
<dbReference type="PANTHER" id="PTHR21071">
    <property type="entry name" value="UDP-N-ACETYLENOLPYRUVOYLGLUCOSAMINE REDUCTASE"/>
    <property type="match status" value="1"/>
</dbReference>
<dbReference type="PANTHER" id="PTHR21071:SF4">
    <property type="entry name" value="UDP-N-ACETYLENOLPYRUVOYLGLUCOSAMINE REDUCTASE"/>
    <property type="match status" value="1"/>
</dbReference>
<dbReference type="Pfam" id="PF01565">
    <property type="entry name" value="FAD_binding_4"/>
    <property type="match status" value="1"/>
</dbReference>
<dbReference type="Pfam" id="PF02873">
    <property type="entry name" value="MurB_C"/>
    <property type="match status" value="1"/>
</dbReference>
<dbReference type="SUPFAM" id="SSF56176">
    <property type="entry name" value="FAD-binding/transporter-associated domain-like"/>
    <property type="match status" value="1"/>
</dbReference>
<dbReference type="SUPFAM" id="SSF56194">
    <property type="entry name" value="Uridine diphospho-N-Acetylenolpyruvylglucosamine reductase, MurB, C-terminal domain"/>
    <property type="match status" value="1"/>
</dbReference>
<dbReference type="PROSITE" id="PS51387">
    <property type="entry name" value="FAD_PCMH"/>
    <property type="match status" value="1"/>
</dbReference>
<organism>
    <name type="scientific">Chloroflexus aggregans (strain MD-66 / DSM 9485)</name>
    <dbReference type="NCBI Taxonomy" id="326427"/>
    <lineage>
        <taxon>Bacteria</taxon>
        <taxon>Bacillati</taxon>
        <taxon>Chloroflexota</taxon>
        <taxon>Chloroflexia</taxon>
        <taxon>Chloroflexales</taxon>
        <taxon>Chloroflexineae</taxon>
        <taxon>Chloroflexaceae</taxon>
        <taxon>Chloroflexus</taxon>
    </lineage>
</organism>
<keyword id="KW-0131">Cell cycle</keyword>
<keyword id="KW-0132">Cell division</keyword>
<keyword id="KW-0133">Cell shape</keyword>
<keyword id="KW-0961">Cell wall biogenesis/degradation</keyword>
<keyword id="KW-0963">Cytoplasm</keyword>
<keyword id="KW-0274">FAD</keyword>
<keyword id="KW-0285">Flavoprotein</keyword>
<keyword id="KW-0521">NADP</keyword>
<keyword id="KW-0560">Oxidoreductase</keyword>
<keyword id="KW-0573">Peptidoglycan synthesis</keyword>
<gene>
    <name evidence="1" type="primary">murB</name>
    <name type="ordered locus">Cagg_2855</name>
</gene>
<protein>
    <recommendedName>
        <fullName evidence="1">UDP-N-acetylenolpyruvoylglucosamine reductase</fullName>
        <ecNumber evidence="1">1.3.1.98</ecNumber>
    </recommendedName>
    <alternativeName>
        <fullName evidence="1">UDP-N-acetylmuramate dehydrogenase</fullName>
    </alternativeName>
</protein>
<proteinExistence type="inferred from homology"/>
<feature type="chain" id="PRO_1000191410" description="UDP-N-acetylenolpyruvoylglucosamine reductase">
    <location>
        <begin position="1"/>
        <end position="297"/>
    </location>
</feature>
<feature type="domain" description="FAD-binding PCMH-type" evidence="1">
    <location>
        <begin position="22"/>
        <end position="195"/>
    </location>
</feature>
<feature type="active site" evidence="1">
    <location>
        <position position="169"/>
    </location>
</feature>
<feature type="active site" description="Proton donor" evidence="1">
    <location>
        <position position="223"/>
    </location>
</feature>
<feature type="active site" evidence="1">
    <location>
        <position position="293"/>
    </location>
</feature>